<gene>
    <name type="primary">speA</name>
</gene>
<sequence length="251" mass="29246">MENNKKVLKKMVFFVLVTFLGLTISQEVFAQQDPDPSQLHRSSLVKNLQNIYFLYEGDPVTHENVKSVDQLLSHDLIYNVSGPNYDKLKTELKNQEMATLFKDKNVDIYGVEYYHLCYLCENAERSACIYGGVTNHEGNHLEIPKKIVVKVSIDGIQSLSFDIETNKKMVTAQELDYKVRKYLTDNKQLYTNGPSKYETGYIKFIPKNKESFWFDFFPEPEFTQSKYLMIYKDNETLDSNTSQIEVYLTTK</sequence>
<name>SPEA_BPT12</name>
<evidence type="ECO:0000250" key="1"/>
<evidence type="ECO:0000255" key="2"/>
<evidence type="ECO:0000305" key="3"/>
<organismHost>
    <name type="scientific">Streptococcus pyogenes</name>
    <dbReference type="NCBI Taxonomy" id="1314"/>
</organismHost>
<dbReference type="EMBL" id="U40453">
    <property type="protein sequence ID" value="AAC48868.1"/>
    <property type="molecule type" value="Genomic_DNA"/>
</dbReference>
<dbReference type="RefSeq" id="YP_009191734.1">
    <property type="nucleotide sequence ID" value="NC_028700.1"/>
</dbReference>
<dbReference type="SMR" id="P0DJY8"/>
<dbReference type="GeneID" id="26519948"/>
<dbReference type="KEGG" id="vg:26519948"/>
<dbReference type="OrthoDB" id="9254at10239"/>
<dbReference type="EvolutionaryTrace" id="P0DJY8"/>
<dbReference type="GO" id="GO:0005576">
    <property type="term" value="C:extracellular region"/>
    <property type="evidence" value="ECO:0007669"/>
    <property type="project" value="InterPro"/>
</dbReference>
<dbReference type="GO" id="GO:0090729">
    <property type="term" value="F:toxin activity"/>
    <property type="evidence" value="ECO:0007669"/>
    <property type="project" value="UniProtKB-KW"/>
</dbReference>
<dbReference type="GO" id="GO:0098676">
    <property type="term" value="P:symbiont-mediated modulation of host virulence"/>
    <property type="evidence" value="ECO:0007669"/>
    <property type="project" value="UniProtKB-KW"/>
</dbReference>
<dbReference type="Gene3D" id="2.40.50.110">
    <property type="match status" value="1"/>
</dbReference>
<dbReference type="Gene3D" id="3.10.20.120">
    <property type="match status" value="1"/>
</dbReference>
<dbReference type="InterPro" id="IPR008992">
    <property type="entry name" value="Enterotoxin"/>
</dbReference>
<dbReference type="InterPro" id="IPR006126">
    <property type="entry name" value="Staph/Strept_toxin_CS"/>
</dbReference>
<dbReference type="InterPro" id="IPR006173">
    <property type="entry name" value="Staph_tox_OB"/>
</dbReference>
<dbReference type="InterPro" id="IPR016091">
    <property type="entry name" value="SuperAg_toxin_C"/>
</dbReference>
<dbReference type="InterPro" id="IPR013307">
    <property type="entry name" value="Superantigen_bac"/>
</dbReference>
<dbReference type="InterPro" id="IPR006123">
    <property type="entry name" value="Toxin_b-grasp_Staph/Strep"/>
</dbReference>
<dbReference type="InterPro" id="IPR006177">
    <property type="entry name" value="Toxin_bac"/>
</dbReference>
<dbReference type="Pfam" id="PF02876">
    <property type="entry name" value="Stap_Strp_tox_C"/>
    <property type="match status" value="1"/>
</dbReference>
<dbReference type="Pfam" id="PF01123">
    <property type="entry name" value="Stap_Strp_toxin"/>
    <property type="match status" value="1"/>
</dbReference>
<dbReference type="PRINTS" id="PR00279">
    <property type="entry name" value="BACTRLTOXIN"/>
</dbReference>
<dbReference type="PRINTS" id="PR01898">
    <property type="entry name" value="SAGSUPRFAMLY"/>
</dbReference>
<dbReference type="SUPFAM" id="SSF50203">
    <property type="entry name" value="Bacterial enterotoxins"/>
    <property type="match status" value="1"/>
</dbReference>
<dbReference type="SUPFAM" id="SSF54334">
    <property type="entry name" value="Superantigen toxins, C-terminal domain"/>
    <property type="match status" value="1"/>
</dbReference>
<dbReference type="PROSITE" id="PS00277">
    <property type="entry name" value="STAPH_STREP_TOXIN_1"/>
    <property type="match status" value="1"/>
</dbReference>
<dbReference type="PROSITE" id="PS00278">
    <property type="entry name" value="STAPH_STREP_TOXIN_2"/>
    <property type="match status" value="1"/>
</dbReference>
<reference key="1">
    <citation type="journal article" date="1986" name="Infect. Immun.">
        <title>Nucleotide sequence of the type A streptococcal exotoxin (erythrogenic toxin) gene from Streptococcus pyogenes bacteriophage T12.</title>
        <authorList>
            <person name="Weeks C.R."/>
            <person name="Ferretti J.J."/>
        </authorList>
    </citation>
    <scope>NUCLEOTIDE SEQUENCE [GENOMIC DNA]</scope>
</reference>
<comment type="miscellaneous">
    <text evidence="1">Binds to major histocompatibility complex class II beta chain.</text>
</comment>
<comment type="similarity">
    <text evidence="3">Belongs to the staphylococcal/streptococcal toxin family.</text>
</comment>
<organism>
    <name type="scientific">Streptococcus pyogenes phage T12</name>
    <name type="common">Bacteriophage T12</name>
    <dbReference type="NCBI Taxonomy" id="35344"/>
    <lineage>
        <taxon>Viruses</taxon>
        <taxon>Duplodnaviria</taxon>
        <taxon>Heunggongvirae</taxon>
        <taxon>Uroviricota</taxon>
        <taxon>Caudoviricetes</taxon>
    </lineage>
</organism>
<keyword id="KW-1015">Disulfide bond</keyword>
<keyword id="KW-1254">Modulation of host virulence by virus</keyword>
<keyword id="KW-0732">Signal</keyword>
<keyword id="KW-0800">Toxin</keyword>
<keyword id="KW-1255">Viral exotoxin</keyword>
<keyword id="KW-0843">Virulence</keyword>
<feature type="signal peptide" evidence="2">
    <location>
        <begin position="1"/>
        <end position="30"/>
    </location>
</feature>
<feature type="chain" id="PRO_0000426106" description="Exotoxin type A">
    <location>
        <begin position="31"/>
        <end position="251"/>
    </location>
</feature>
<feature type="disulfide bond" evidence="1">
    <location>
        <begin position="117"/>
        <end position="128"/>
    </location>
</feature>
<proteinExistence type="inferred from homology"/>
<protein>
    <recommendedName>
        <fullName>Exotoxin type A</fullName>
    </recommendedName>
    <alternativeName>
        <fullName>Erythrogenic toxin</fullName>
    </alternativeName>
    <alternativeName>
        <fullName>SPE A</fullName>
    </alternativeName>
    <alternativeName>
        <fullName>Scarlet fever toxin</fullName>
    </alternativeName>
</protein>
<accession>P0DJY8</accession>
<accession>P08095</accession>
<accession>P62560</accession>